<dbReference type="EC" id="3.5.5.1"/>
<dbReference type="EMBL" id="D13419">
    <property type="protein sequence ID" value="BAA02684.1"/>
    <property type="molecule type" value="Genomic_DNA"/>
</dbReference>
<dbReference type="PIR" id="A47181">
    <property type="entry name" value="A47181"/>
</dbReference>
<dbReference type="RefSeq" id="WP_042484030.1">
    <property type="nucleotide sequence ID" value="NZ_JBGNWU010000002.1"/>
</dbReference>
<dbReference type="SMR" id="P20960"/>
<dbReference type="STRING" id="511.UZ73_05730"/>
<dbReference type="KEGG" id="ag:BAA02684"/>
<dbReference type="eggNOG" id="COG0388">
    <property type="taxonomic scope" value="Bacteria"/>
</dbReference>
<dbReference type="OrthoDB" id="9803803at2"/>
<dbReference type="BioCyc" id="MetaCyc:MONOMER-11587"/>
<dbReference type="BRENDA" id="3.5.5.1">
    <property type="organism ID" value="232"/>
</dbReference>
<dbReference type="GO" id="GO:0000257">
    <property type="term" value="F:nitrilase activity"/>
    <property type="evidence" value="ECO:0007669"/>
    <property type="project" value="UniProtKB-EC"/>
</dbReference>
<dbReference type="CDD" id="cd07564">
    <property type="entry name" value="nitrilases_CHs"/>
    <property type="match status" value="1"/>
</dbReference>
<dbReference type="Gene3D" id="3.60.110.10">
    <property type="entry name" value="Carbon-nitrogen hydrolase"/>
    <property type="match status" value="1"/>
</dbReference>
<dbReference type="InterPro" id="IPR003010">
    <property type="entry name" value="C-N_Hydrolase"/>
</dbReference>
<dbReference type="InterPro" id="IPR036526">
    <property type="entry name" value="C-N_Hydrolase_sf"/>
</dbReference>
<dbReference type="InterPro" id="IPR000132">
    <property type="entry name" value="Nitrilase/CN_hydratase_CS"/>
</dbReference>
<dbReference type="InterPro" id="IPR044149">
    <property type="entry name" value="Nitrilases_CHs"/>
</dbReference>
<dbReference type="PANTHER" id="PTHR46044:SF14">
    <property type="entry name" value="ARYLACETONITRILASE"/>
    <property type="match status" value="1"/>
</dbReference>
<dbReference type="PANTHER" id="PTHR46044">
    <property type="entry name" value="NITRILASE"/>
    <property type="match status" value="1"/>
</dbReference>
<dbReference type="Pfam" id="PF00795">
    <property type="entry name" value="CN_hydrolase"/>
    <property type="match status" value="1"/>
</dbReference>
<dbReference type="SUPFAM" id="SSF56317">
    <property type="entry name" value="Carbon-nitrogen hydrolase"/>
    <property type="match status" value="1"/>
</dbReference>
<dbReference type="PROSITE" id="PS50263">
    <property type="entry name" value="CN_HYDROLASE"/>
    <property type="match status" value="1"/>
</dbReference>
<dbReference type="PROSITE" id="PS00920">
    <property type="entry name" value="NITRIL_CHT_1"/>
    <property type="match status" value="1"/>
</dbReference>
<dbReference type="PROSITE" id="PS00921">
    <property type="entry name" value="NITRIL_CHT_2"/>
    <property type="match status" value="1"/>
</dbReference>
<accession>P20960</accession>
<sequence length="356" mass="38908">MQTRKIVRAAAVQAASPNYDLATGVDKTIELARQARDEGCDLIVFGETWLPGYPFHVWLGAPAWSLKYSARYYANSLSLDSAEFQRIAQAARTLGIFIALGYSERSGGSLYLGQCLIDDKGQMLWSRRKLKPTHVERTVFGEGYARDLIVSDTELGRVGALCCWEHLSPLSKYALYSQHEAIHIAAWPSFSLYSEQAHALSAKVNMAASQIYSVEGQCFTIAASSVVTQETLDMLEVGEHNASLLKVGGGSSMIFAPDGRTLAPYLPHDAEGLIIADLNMEEIAFAKAINDPVGHYSKPEATRLVLDLGHREPMTRVHSKSVIQEEAPEPHVQSTAAPVAVSQTQDSDTLLVQEPS</sequence>
<protein>
    <recommendedName>
        <fullName>Nitrilase, arylacetone-specific</fullName>
        <ecNumber>3.5.5.1</ecNumber>
    </recommendedName>
    <alternativeName>
        <fullName>Arylacetonitrilase</fullName>
    </alternativeName>
</protein>
<proteinExistence type="evidence at protein level"/>
<feature type="chain" id="PRO_0000204042" description="Nitrilase, arylacetone-specific">
    <location>
        <begin position="1"/>
        <end position="356"/>
    </location>
</feature>
<feature type="domain" description="CN hydrolase" evidence="1">
    <location>
        <begin position="7"/>
        <end position="280"/>
    </location>
</feature>
<feature type="region of interest" description="Disordered" evidence="3">
    <location>
        <begin position="324"/>
        <end position="356"/>
    </location>
</feature>
<feature type="compositionally biased region" description="Polar residues" evidence="3">
    <location>
        <begin position="332"/>
        <end position="356"/>
    </location>
</feature>
<feature type="active site" description="Proton acceptor" evidence="1">
    <location>
        <position position="47"/>
    </location>
</feature>
<feature type="active site" description="Proton donor" evidence="1">
    <location>
        <position position="129"/>
    </location>
</feature>
<feature type="active site" description="Nucleophile">
    <location>
        <position position="163"/>
    </location>
</feature>
<feature type="mutagenesis site" description="Increase of activity." evidence="4">
    <original>C</original>
    <variation>N</variation>
    <location>
        <position position="162"/>
    </location>
</feature>
<feature type="mutagenesis site" description="100% loss of activity." evidence="4">
    <original>C</original>
    <variation>A</variation>
    <location>
        <position position="163"/>
    </location>
</feature>
<reference key="1">
    <citation type="journal article" date="1993" name="Proc. Natl. Acad. Sci. U.S.A.">
        <title>Nitrilase in biosynthesis of the plant hormone indole-3-acetic acid from indole-3-acetonitrile: cloning of the Alcaligenes gene and site-directed mutagenesis of cysteine residues.</title>
        <authorList>
            <person name="Kobayashi M."/>
            <person name="Izui H."/>
            <person name="Nagasawa T."/>
            <person name="Yamada H."/>
        </authorList>
    </citation>
    <scope>NUCLEOTIDE SEQUENCE [GENOMIC DNA]</scope>
    <scope>PARTIAL PROTEIN SEQUENCE</scope>
    <scope>MUTAGENESIS OF CYS-162 AND CYS-163</scope>
    <source>
        <strain>JM3</strain>
    </source>
</reference>
<reference key="2">
    <citation type="journal article" date="1990" name="Eur. J. Biochem.">
        <title>A novel nitrilase, arylacetonitrilase, of Alcaligenes faecalis JM3. Purification and characterization.</title>
        <authorList>
            <person name="Nagasawa T."/>
            <person name="Mauger J."/>
            <person name="Yamada H."/>
        </authorList>
    </citation>
    <scope>PROTEIN SEQUENCE OF 1-33</scope>
    <source>
        <strain>JM3</strain>
    </source>
</reference>
<comment type="function">
    <text>Nitrilase that acts mostly on arylacetonitriles.</text>
</comment>
<comment type="catalytic activity">
    <reaction evidence="2">
        <text>a nitrile + 2 H2O = a carboxylate + NH4(+)</text>
        <dbReference type="Rhea" id="RHEA:21724"/>
        <dbReference type="ChEBI" id="CHEBI:15377"/>
        <dbReference type="ChEBI" id="CHEBI:18379"/>
        <dbReference type="ChEBI" id="CHEBI:28938"/>
        <dbReference type="ChEBI" id="CHEBI:29067"/>
        <dbReference type="EC" id="3.5.5.1"/>
    </reaction>
</comment>
<comment type="subunit">
    <text evidence="5">Homohexamer.</text>
</comment>
<comment type="similarity">
    <text evidence="5">Belongs to the carbon-nitrogen hydrolase superfamily. Nitrilase family.</text>
</comment>
<name>NRLA_ALCFA</name>
<evidence type="ECO:0000255" key="1">
    <source>
        <dbReference type="PROSITE-ProRule" id="PRU00054"/>
    </source>
</evidence>
<evidence type="ECO:0000255" key="2">
    <source>
        <dbReference type="PROSITE-ProRule" id="PRU10105"/>
    </source>
</evidence>
<evidence type="ECO:0000256" key="3">
    <source>
        <dbReference type="SAM" id="MobiDB-lite"/>
    </source>
</evidence>
<evidence type="ECO:0000269" key="4">
    <source>
    </source>
</evidence>
<evidence type="ECO:0000305" key="5"/>
<keyword id="KW-0903">Direct protein sequencing</keyword>
<keyword id="KW-0378">Hydrolase</keyword>
<organism>
    <name type="scientific">Alcaligenes faecalis</name>
    <dbReference type="NCBI Taxonomy" id="511"/>
    <lineage>
        <taxon>Bacteria</taxon>
        <taxon>Pseudomonadati</taxon>
        <taxon>Pseudomonadota</taxon>
        <taxon>Betaproteobacteria</taxon>
        <taxon>Burkholderiales</taxon>
        <taxon>Alcaligenaceae</taxon>
        <taxon>Alcaligenes</taxon>
    </lineage>
</organism>